<evidence type="ECO:0000250" key="1"/>
<evidence type="ECO:0000256" key="2">
    <source>
        <dbReference type="SAM" id="MobiDB-lite"/>
    </source>
</evidence>
<evidence type="ECO:0000305" key="3"/>
<protein>
    <recommendedName>
        <fullName evidence="3">Small ribosomal subunit protein bS6</fullName>
    </recommendedName>
    <alternativeName>
        <fullName>30S ribosomal protein S6</fullName>
    </alternativeName>
</protein>
<sequence length="125" mass="14484">MRHYEIVFMVHPDQSEQVPGMIERYTGSVKEAGGQVHRLEDWGRRQLAYPINKLHKAHYVLMNVEAPQQVIDELETTFRYNDAVLRSLVIHTKHAVTEASPMKAAKEERKPLAEVENNDFEDAEE</sequence>
<comment type="function">
    <text evidence="1">Binds together with bS18 to 16S ribosomal RNA.</text>
</comment>
<comment type="PTM">
    <text evidence="1">Modified post-translationally by the addition of C-terminal Glu residues by the RIMK enzyme.</text>
</comment>
<comment type="similarity">
    <text evidence="3">Belongs to the bacterial ribosomal protein bS6 family.</text>
</comment>
<organism>
    <name type="scientific">Haemophilus influenzae (strain ATCC 51907 / DSM 11121 / KW20 / Rd)</name>
    <dbReference type="NCBI Taxonomy" id="71421"/>
    <lineage>
        <taxon>Bacteria</taxon>
        <taxon>Pseudomonadati</taxon>
        <taxon>Pseudomonadota</taxon>
        <taxon>Gammaproteobacteria</taxon>
        <taxon>Pasteurellales</taxon>
        <taxon>Pasteurellaceae</taxon>
        <taxon>Haemophilus</taxon>
    </lineage>
</organism>
<proteinExistence type="inferred from homology"/>
<accession>P44375</accession>
<gene>
    <name type="primary">rpsF</name>
    <name type="synonym">rps6</name>
    <name type="ordered locus">HI_0547</name>
</gene>
<keyword id="KW-1185">Reference proteome</keyword>
<keyword id="KW-0687">Ribonucleoprotein</keyword>
<keyword id="KW-0689">Ribosomal protein</keyword>
<keyword id="KW-0694">RNA-binding</keyword>
<keyword id="KW-0699">rRNA-binding</keyword>
<feature type="chain" id="PRO_0000176774" description="Small ribosomal subunit protein bS6">
    <location>
        <begin position="1"/>
        <end position="125"/>
    </location>
</feature>
<feature type="region of interest" description="Disordered" evidence="2">
    <location>
        <begin position="96"/>
        <end position="125"/>
    </location>
</feature>
<feature type="compositionally biased region" description="Basic and acidic residues" evidence="2">
    <location>
        <begin position="104"/>
        <end position="113"/>
    </location>
</feature>
<feature type="compositionally biased region" description="Acidic residues" evidence="2">
    <location>
        <begin position="116"/>
        <end position="125"/>
    </location>
</feature>
<reference key="1">
    <citation type="journal article" date="1995" name="Science">
        <title>Whole-genome random sequencing and assembly of Haemophilus influenzae Rd.</title>
        <authorList>
            <person name="Fleischmann R.D."/>
            <person name="Adams M.D."/>
            <person name="White O."/>
            <person name="Clayton R.A."/>
            <person name="Kirkness E.F."/>
            <person name="Kerlavage A.R."/>
            <person name="Bult C.J."/>
            <person name="Tomb J.-F."/>
            <person name="Dougherty B.A."/>
            <person name="Merrick J.M."/>
            <person name="McKenney K."/>
            <person name="Sutton G.G."/>
            <person name="FitzHugh W."/>
            <person name="Fields C.A."/>
            <person name="Gocayne J.D."/>
            <person name="Scott J.D."/>
            <person name="Shirley R."/>
            <person name="Liu L.-I."/>
            <person name="Glodek A."/>
            <person name="Kelley J.M."/>
            <person name="Weidman J.F."/>
            <person name="Phillips C.A."/>
            <person name="Spriggs T."/>
            <person name="Hedblom E."/>
            <person name="Cotton M.D."/>
            <person name="Utterback T.R."/>
            <person name="Hanna M.C."/>
            <person name="Nguyen D.T."/>
            <person name="Saudek D.M."/>
            <person name="Brandon R.C."/>
            <person name="Fine L.D."/>
            <person name="Fritchman J.L."/>
            <person name="Fuhrmann J.L."/>
            <person name="Geoghagen N.S.M."/>
            <person name="Gnehm C.L."/>
            <person name="McDonald L.A."/>
            <person name="Small K.V."/>
            <person name="Fraser C.M."/>
            <person name="Smith H.O."/>
            <person name="Venter J.C."/>
        </authorList>
    </citation>
    <scope>NUCLEOTIDE SEQUENCE [LARGE SCALE GENOMIC DNA]</scope>
    <source>
        <strain>ATCC 51907 / DSM 11121 / KW20 / Rd</strain>
    </source>
</reference>
<dbReference type="EMBL" id="L42023">
    <property type="protein sequence ID" value="AAC22205.1"/>
    <property type="molecule type" value="Genomic_DNA"/>
</dbReference>
<dbReference type="PIR" id="G64076">
    <property type="entry name" value="G64076"/>
</dbReference>
<dbReference type="RefSeq" id="NP_438705.1">
    <property type="nucleotide sequence ID" value="NC_000907.1"/>
</dbReference>
<dbReference type="SMR" id="P44375"/>
<dbReference type="STRING" id="71421.HI_0547"/>
<dbReference type="EnsemblBacteria" id="AAC22205">
    <property type="protein sequence ID" value="AAC22205"/>
    <property type="gene ID" value="HI_0547"/>
</dbReference>
<dbReference type="KEGG" id="hin:HI_0547"/>
<dbReference type="PATRIC" id="fig|71421.8.peg.566"/>
<dbReference type="eggNOG" id="COG0360">
    <property type="taxonomic scope" value="Bacteria"/>
</dbReference>
<dbReference type="HOGENOM" id="CLU_113441_6_1_6"/>
<dbReference type="OrthoDB" id="9812702at2"/>
<dbReference type="PhylomeDB" id="P44375"/>
<dbReference type="BioCyc" id="HINF71421:G1GJ1-560-MONOMER"/>
<dbReference type="PRO" id="PR:P44375"/>
<dbReference type="Proteomes" id="UP000000579">
    <property type="component" value="Chromosome"/>
</dbReference>
<dbReference type="GO" id="GO:0022627">
    <property type="term" value="C:cytosolic small ribosomal subunit"/>
    <property type="evidence" value="ECO:0000318"/>
    <property type="project" value="GO_Central"/>
</dbReference>
<dbReference type="GO" id="GO:0070181">
    <property type="term" value="F:small ribosomal subunit rRNA binding"/>
    <property type="evidence" value="ECO:0000318"/>
    <property type="project" value="GO_Central"/>
</dbReference>
<dbReference type="GO" id="GO:0003735">
    <property type="term" value="F:structural constituent of ribosome"/>
    <property type="evidence" value="ECO:0000318"/>
    <property type="project" value="GO_Central"/>
</dbReference>
<dbReference type="GO" id="GO:0006412">
    <property type="term" value="P:translation"/>
    <property type="evidence" value="ECO:0007669"/>
    <property type="project" value="UniProtKB-UniRule"/>
</dbReference>
<dbReference type="CDD" id="cd00473">
    <property type="entry name" value="bS6"/>
    <property type="match status" value="1"/>
</dbReference>
<dbReference type="FunFam" id="3.30.70.60:FF:000003">
    <property type="entry name" value="30S ribosomal protein S6"/>
    <property type="match status" value="1"/>
</dbReference>
<dbReference type="Gene3D" id="3.30.70.60">
    <property type="match status" value="1"/>
</dbReference>
<dbReference type="HAMAP" id="MF_00360">
    <property type="entry name" value="Ribosomal_bS6"/>
    <property type="match status" value="1"/>
</dbReference>
<dbReference type="InterPro" id="IPR000529">
    <property type="entry name" value="Ribosomal_bS6"/>
</dbReference>
<dbReference type="InterPro" id="IPR020815">
    <property type="entry name" value="Ribosomal_bS6_CS"/>
</dbReference>
<dbReference type="InterPro" id="IPR035980">
    <property type="entry name" value="Ribosomal_bS6_sf"/>
</dbReference>
<dbReference type="InterPro" id="IPR020814">
    <property type="entry name" value="Ribosomal_S6_plastid/chlpt"/>
</dbReference>
<dbReference type="InterPro" id="IPR014717">
    <property type="entry name" value="Transl_elong_EF1B/ribsomal_bS6"/>
</dbReference>
<dbReference type="NCBIfam" id="TIGR00166">
    <property type="entry name" value="S6"/>
    <property type="match status" value="1"/>
</dbReference>
<dbReference type="PANTHER" id="PTHR21011">
    <property type="entry name" value="MITOCHONDRIAL 28S RIBOSOMAL PROTEIN S6"/>
    <property type="match status" value="1"/>
</dbReference>
<dbReference type="PANTHER" id="PTHR21011:SF1">
    <property type="entry name" value="SMALL RIBOSOMAL SUBUNIT PROTEIN BS6M"/>
    <property type="match status" value="1"/>
</dbReference>
<dbReference type="Pfam" id="PF01250">
    <property type="entry name" value="Ribosomal_S6"/>
    <property type="match status" value="1"/>
</dbReference>
<dbReference type="SUPFAM" id="SSF54995">
    <property type="entry name" value="Ribosomal protein S6"/>
    <property type="match status" value="1"/>
</dbReference>
<dbReference type="PROSITE" id="PS01048">
    <property type="entry name" value="RIBOSOMAL_S6"/>
    <property type="match status" value="1"/>
</dbReference>
<name>RS6_HAEIN</name>